<keyword id="KW-1185">Reference proteome</keyword>
<keyword id="KW-0687">Ribonucleoprotein</keyword>
<keyword id="KW-0689">Ribosomal protein</keyword>
<keyword id="KW-0694">RNA-binding</keyword>
<keyword id="KW-0699">rRNA-binding</keyword>
<name>RL4_KOSOT</name>
<proteinExistence type="inferred from homology"/>
<organism>
    <name type="scientific">Kosmotoga olearia (strain ATCC BAA-1733 / DSM 21960 / TBF 19.5.1)</name>
    <dbReference type="NCBI Taxonomy" id="521045"/>
    <lineage>
        <taxon>Bacteria</taxon>
        <taxon>Thermotogati</taxon>
        <taxon>Thermotogota</taxon>
        <taxon>Thermotogae</taxon>
        <taxon>Kosmotogales</taxon>
        <taxon>Kosmotogaceae</taxon>
        <taxon>Kosmotoga</taxon>
    </lineage>
</organism>
<protein>
    <recommendedName>
        <fullName evidence="1">Large ribosomal subunit protein uL4</fullName>
    </recommendedName>
    <alternativeName>
        <fullName evidence="3">50S ribosomal protein L4</fullName>
    </alternativeName>
</protein>
<dbReference type="EMBL" id="CP001634">
    <property type="protein sequence ID" value="ACR80582.1"/>
    <property type="molecule type" value="Genomic_DNA"/>
</dbReference>
<dbReference type="RefSeq" id="WP_015869225.1">
    <property type="nucleotide sequence ID" value="NC_012785.1"/>
</dbReference>
<dbReference type="SMR" id="C5CGR3"/>
<dbReference type="STRING" id="521045.Kole_1901"/>
<dbReference type="KEGG" id="kol:Kole_1901"/>
<dbReference type="eggNOG" id="COG0088">
    <property type="taxonomic scope" value="Bacteria"/>
</dbReference>
<dbReference type="HOGENOM" id="CLU_041575_5_2_0"/>
<dbReference type="OrthoDB" id="9803201at2"/>
<dbReference type="Proteomes" id="UP000002382">
    <property type="component" value="Chromosome"/>
</dbReference>
<dbReference type="GO" id="GO:1990904">
    <property type="term" value="C:ribonucleoprotein complex"/>
    <property type="evidence" value="ECO:0007669"/>
    <property type="project" value="UniProtKB-KW"/>
</dbReference>
<dbReference type="GO" id="GO:0005840">
    <property type="term" value="C:ribosome"/>
    <property type="evidence" value="ECO:0007669"/>
    <property type="project" value="UniProtKB-KW"/>
</dbReference>
<dbReference type="GO" id="GO:0019843">
    <property type="term" value="F:rRNA binding"/>
    <property type="evidence" value="ECO:0007669"/>
    <property type="project" value="UniProtKB-UniRule"/>
</dbReference>
<dbReference type="GO" id="GO:0003735">
    <property type="term" value="F:structural constituent of ribosome"/>
    <property type="evidence" value="ECO:0007669"/>
    <property type="project" value="InterPro"/>
</dbReference>
<dbReference type="GO" id="GO:0006412">
    <property type="term" value="P:translation"/>
    <property type="evidence" value="ECO:0007669"/>
    <property type="project" value="UniProtKB-UniRule"/>
</dbReference>
<dbReference type="Gene3D" id="3.40.1370.10">
    <property type="match status" value="1"/>
</dbReference>
<dbReference type="HAMAP" id="MF_01328_B">
    <property type="entry name" value="Ribosomal_uL4_B"/>
    <property type="match status" value="1"/>
</dbReference>
<dbReference type="InterPro" id="IPR002136">
    <property type="entry name" value="Ribosomal_uL4"/>
</dbReference>
<dbReference type="InterPro" id="IPR013005">
    <property type="entry name" value="Ribosomal_uL4-like"/>
</dbReference>
<dbReference type="InterPro" id="IPR023574">
    <property type="entry name" value="Ribosomal_uL4_dom_sf"/>
</dbReference>
<dbReference type="NCBIfam" id="TIGR03953">
    <property type="entry name" value="rplD_bact"/>
    <property type="match status" value="1"/>
</dbReference>
<dbReference type="PANTHER" id="PTHR10746">
    <property type="entry name" value="50S RIBOSOMAL PROTEIN L4"/>
    <property type="match status" value="1"/>
</dbReference>
<dbReference type="PANTHER" id="PTHR10746:SF6">
    <property type="entry name" value="LARGE RIBOSOMAL SUBUNIT PROTEIN UL4M"/>
    <property type="match status" value="1"/>
</dbReference>
<dbReference type="Pfam" id="PF00573">
    <property type="entry name" value="Ribosomal_L4"/>
    <property type="match status" value="1"/>
</dbReference>
<dbReference type="SUPFAM" id="SSF52166">
    <property type="entry name" value="Ribosomal protein L4"/>
    <property type="match status" value="1"/>
</dbReference>
<evidence type="ECO:0000255" key="1">
    <source>
        <dbReference type="HAMAP-Rule" id="MF_01328"/>
    </source>
</evidence>
<evidence type="ECO:0000256" key="2">
    <source>
        <dbReference type="SAM" id="MobiDB-lite"/>
    </source>
</evidence>
<evidence type="ECO:0000305" key="3"/>
<comment type="function">
    <text evidence="1">One of the primary rRNA binding proteins, this protein initially binds near the 5'-end of the 23S rRNA. It is important during the early stages of 50S assembly. It makes multiple contacts with different domains of the 23S rRNA in the assembled 50S subunit and ribosome.</text>
</comment>
<comment type="function">
    <text evidence="1">Forms part of the polypeptide exit tunnel.</text>
</comment>
<comment type="subunit">
    <text evidence="1">Part of the 50S ribosomal subunit.</text>
</comment>
<comment type="similarity">
    <text evidence="1">Belongs to the universal ribosomal protein uL4 family.</text>
</comment>
<accession>C5CGR3</accession>
<reference key="1">
    <citation type="submission" date="2009-06" db="EMBL/GenBank/DDBJ databases">
        <title>Complete sequence of Thermotogales bacterium TBF 19.5.1.</title>
        <authorList>
            <consortium name="US DOE Joint Genome Institute"/>
            <person name="Lucas S."/>
            <person name="Copeland A."/>
            <person name="Lapidus A."/>
            <person name="Glavina del Rio T."/>
            <person name="Tice H."/>
            <person name="Bruce D."/>
            <person name="Goodwin L."/>
            <person name="Pitluck S."/>
            <person name="Chertkov O."/>
            <person name="Brettin T."/>
            <person name="Detter J.C."/>
            <person name="Han C."/>
            <person name="Schmutz J."/>
            <person name="Larimer F."/>
            <person name="Land M."/>
            <person name="Hauser L."/>
            <person name="Kyrpides N."/>
            <person name="Ovchinnikova G."/>
            <person name="Noll K."/>
        </authorList>
    </citation>
    <scope>NUCLEOTIDE SEQUENCE [LARGE SCALE GENOMIC DNA]</scope>
    <source>
        <strain>ATCC BAA-1733 / DSM 21960 / TBF 19.5.1</strain>
    </source>
</reference>
<sequence length="226" mass="25444">MAQTDVLNVTGNKIGTVELKDSIFNIEPNYDVMFRYVDMQLANRRAGTAKAKTRSEVSGGGRKPWPQKHTGRARTGSIRNPLWRHGGVIHGPKPKDWSKKLNKKMKKLALKSALSLRFKEGNLVVVDDIKLDRPKTKQMREIVKNLGLSDAKKVLFILPWKRDEYENVKLSGRNIPGVKVIIADNPGNLVNGRSSNIDGLNVFDILNHEKIVFTVDLVRKIEEVLG</sequence>
<feature type="chain" id="PRO_1000214577" description="Large ribosomal subunit protein uL4">
    <location>
        <begin position="1"/>
        <end position="226"/>
    </location>
</feature>
<feature type="region of interest" description="Disordered" evidence="2">
    <location>
        <begin position="47"/>
        <end position="74"/>
    </location>
</feature>
<gene>
    <name evidence="1" type="primary">rplD</name>
    <name type="ordered locus">Kole_1901</name>
</gene>